<reference key="1">
    <citation type="journal article" date="1994" name="Gene">
        <title>The sequence of the groES and groEL genes from the mouse pneumonitis agent of Chlamydia trachomatis.</title>
        <authorList>
            <person name="Ho Y."/>
            <person name="Zhang Y.-X."/>
        </authorList>
    </citation>
    <scope>NUCLEOTIDE SEQUENCE [GENOMIC DNA]</scope>
    <source>
        <strain>MoPn</strain>
    </source>
</reference>
<reference key="2">
    <citation type="journal article" date="1996" name="J. Bacteriol.">
        <title>Transcriptional organization and regulation of the dnaK and groE operons of Chlamydia trachomatis.</title>
        <authorList>
            <person name="Tan M."/>
            <person name="Wong B."/>
            <person name="Engel J.N."/>
        </authorList>
    </citation>
    <scope>NUCLEOTIDE SEQUENCE [GENOMIC DNA]</scope>
    <source>
        <strain>MoPn</strain>
    </source>
</reference>
<reference key="3">
    <citation type="journal article" date="2000" name="Nucleic Acids Res.">
        <title>Genome sequences of Chlamydia trachomatis MoPn and Chlamydia pneumoniae AR39.</title>
        <authorList>
            <person name="Read T.D."/>
            <person name="Brunham R.C."/>
            <person name="Shen C."/>
            <person name="Gill S.R."/>
            <person name="Heidelberg J.F."/>
            <person name="White O."/>
            <person name="Hickey E.K."/>
            <person name="Peterson J.D."/>
            <person name="Utterback T.R."/>
            <person name="Berry K.J."/>
            <person name="Bass S."/>
            <person name="Linher K.D."/>
            <person name="Weidman J.F."/>
            <person name="Khouri H.M."/>
            <person name="Craven B."/>
            <person name="Bowman C."/>
            <person name="Dodson R.J."/>
            <person name="Gwinn M.L."/>
            <person name="Nelson W.C."/>
            <person name="DeBoy R.T."/>
            <person name="Kolonay J.F."/>
            <person name="McClarty G."/>
            <person name="Salzberg S.L."/>
            <person name="Eisen J.A."/>
            <person name="Fraser C.M."/>
        </authorList>
    </citation>
    <scope>NUCLEOTIDE SEQUENCE [LARGE SCALE GENOMIC DNA]</scope>
    <source>
        <strain>MoPn / Nigg</strain>
    </source>
</reference>
<feature type="initiator methionine" description="Removed" evidence="1">
    <location>
        <position position="1"/>
    </location>
</feature>
<feature type="chain" id="PRO_0000063327" description="Chaperonin GroEL">
    <location>
        <begin position="2"/>
        <end position="544"/>
    </location>
</feature>
<feature type="binding site" evidence="2">
    <location>
        <begin position="30"/>
        <end position="33"/>
    </location>
    <ligand>
        <name>ATP</name>
        <dbReference type="ChEBI" id="CHEBI:30616"/>
    </ligand>
</feature>
<feature type="binding site" evidence="2">
    <location>
        <position position="51"/>
    </location>
    <ligand>
        <name>ATP</name>
        <dbReference type="ChEBI" id="CHEBI:30616"/>
    </ligand>
</feature>
<feature type="binding site" evidence="2">
    <location>
        <begin position="87"/>
        <end position="91"/>
    </location>
    <ligand>
        <name>ATP</name>
        <dbReference type="ChEBI" id="CHEBI:30616"/>
    </ligand>
</feature>
<feature type="binding site" evidence="2">
    <location>
        <position position="415"/>
    </location>
    <ligand>
        <name>ATP</name>
        <dbReference type="ChEBI" id="CHEBI:30616"/>
    </ligand>
</feature>
<feature type="binding site" evidence="2">
    <location>
        <begin position="481"/>
        <end position="483"/>
    </location>
    <ligand>
        <name>ATP</name>
        <dbReference type="ChEBI" id="CHEBI:30616"/>
    </ligand>
</feature>
<feature type="binding site" evidence="2">
    <location>
        <position position="497"/>
    </location>
    <ligand>
        <name>ATP</name>
        <dbReference type="ChEBI" id="CHEBI:30616"/>
    </ligand>
</feature>
<feature type="sequence conflict" description="In Ref. 1; AAA19871." evidence="3" ref="1">
    <original>I</original>
    <variation>N</variation>
    <location>
        <position position="387"/>
    </location>
</feature>
<sequence length="544" mass="58106">MVAKNIKYNEEARKKIQKGVKTLAEAVKVTLGPKGRHVVIDKSFGSPQVTKDGVTVAKEVELADKHENMGAQMVKEVASKTADKAGDGTTTATVLAEAIYTEGLRNVTAGANPMDLKRGIDKAVKVVVDQIKKISKPVQHHKEIAQVATISANNDAEIGNLIAEAMEKVGKNGSITVEEAKGFETVLDVVEGMNFNRGYLSSYFATNPETQECVLEDALVLIYDKKISGIKDFLPVLQQVAESGRPLLIIAEDIEGEALATLVVNRIRGGFRVCAVKAPGFGDRRKAMLEDIAILTGGQLISEELGMKLENASLAMLGKAKKVIVSKEDTTIVEGMGEKEALDARCESIKKQIEDSTSDYDKEKLQERLAKLSGGVAVIRVGAATEIEMKEKKDRVDDAQHATIAAVEEGILPGGGTALIRCIPTLEAFLPMLTNEDERIGARIVLKALSAPLKQIAANAGKEGAIIFQQVMSRSANEGYDALRDAYTDMIEAGILDPAKVTRSALESAASVAGLLLTTEALIAEIPEEKPAAAPAMPGAGMDY</sequence>
<accession>Q59322</accession>
<accession>P56837</accession>
<protein>
    <recommendedName>
        <fullName evidence="2">Chaperonin GroEL</fullName>
        <ecNumber evidence="2">5.6.1.7</ecNumber>
    </recommendedName>
    <alternativeName>
        <fullName evidence="2">60 kDa chaperonin</fullName>
    </alternativeName>
    <alternativeName>
        <fullName evidence="2">Chaperonin-60</fullName>
        <shortName evidence="2">Cpn60</shortName>
    </alternativeName>
</protein>
<gene>
    <name evidence="2" type="primary">groEL</name>
    <name evidence="2" type="synonym">groL</name>
    <name type="synonym">mopA</name>
    <name type="ordered locus">TC_0386</name>
</gene>
<organism>
    <name type="scientific">Chlamydia muridarum (strain MoPn / Nigg)</name>
    <dbReference type="NCBI Taxonomy" id="243161"/>
    <lineage>
        <taxon>Bacteria</taxon>
        <taxon>Pseudomonadati</taxon>
        <taxon>Chlamydiota</taxon>
        <taxon>Chlamydiia</taxon>
        <taxon>Chlamydiales</taxon>
        <taxon>Chlamydiaceae</taxon>
        <taxon>Chlamydia/Chlamydophila group</taxon>
        <taxon>Chlamydia</taxon>
    </lineage>
</organism>
<dbReference type="EC" id="5.6.1.7" evidence="2"/>
<dbReference type="EMBL" id="L12004">
    <property type="protein sequence ID" value="AAA19871.1"/>
    <property type="molecule type" value="Genomic_DNA"/>
</dbReference>
<dbReference type="EMBL" id="U52049">
    <property type="protein sequence ID" value="AAA97911.1"/>
    <property type="molecule type" value="Genomic_DNA"/>
</dbReference>
<dbReference type="EMBL" id="AE002160">
    <property type="protein sequence ID" value="AAF39243.1"/>
    <property type="molecule type" value="Genomic_DNA"/>
</dbReference>
<dbReference type="PIR" id="D81709">
    <property type="entry name" value="D81709"/>
</dbReference>
<dbReference type="PIR" id="I40731">
    <property type="entry name" value="I40731"/>
</dbReference>
<dbReference type="RefSeq" id="WP_010230304.1">
    <property type="nucleotide sequence ID" value="NZ_CP063055.1"/>
</dbReference>
<dbReference type="SMR" id="Q59322"/>
<dbReference type="GeneID" id="1245738"/>
<dbReference type="KEGG" id="cmu:TC_0386"/>
<dbReference type="eggNOG" id="COG0459">
    <property type="taxonomic scope" value="Bacteria"/>
</dbReference>
<dbReference type="HOGENOM" id="CLU_016503_3_0_0"/>
<dbReference type="OrthoDB" id="9766614at2"/>
<dbReference type="Proteomes" id="UP000000800">
    <property type="component" value="Chromosome"/>
</dbReference>
<dbReference type="GO" id="GO:0005737">
    <property type="term" value="C:cytoplasm"/>
    <property type="evidence" value="ECO:0007669"/>
    <property type="project" value="UniProtKB-SubCell"/>
</dbReference>
<dbReference type="GO" id="GO:0005524">
    <property type="term" value="F:ATP binding"/>
    <property type="evidence" value="ECO:0007669"/>
    <property type="project" value="UniProtKB-UniRule"/>
</dbReference>
<dbReference type="GO" id="GO:0140662">
    <property type="term" value="F:ATP-dependent protein folding chaperone"/>
    <property type="evidence" value="ECO:0007669"/>
    <property type="project" value="InterPro"/>
</dbReference>
<dbReference type="GO" id="GO:0016853">
    <property type="term" value="F:isomerase activity"/>
    <property type="evidence" value="ECO:0007669"/>
    <property type="project" value="UniProtKB-KW"/>
</dbReference>
<dbReference type="GO" id="GO:0051082">
    <property type="term" value="F:unfolded protein binding"/>
    <property type="evidence" value="ECO:0007669"/>
    <property type="project" value="UniProtKB-UniRule"/>
</dbReference>
<dbReference type="GO" id="GO:0042026">
    <property type="term" value="P:protein refolding"/>
    <property type="evidence" value="ECO:0007669"/>
    <property type="project" value="UniProtKB-UniRule"/>
</dbReference>
<dbReference type="CDD" id="cd03344">
    <property type="entry name" value="GroEL"/>
    <property type="match status" value="1"/>
</dbReference>
<dbReference type="FunFam" id="1.10.560.10:FF:000001">
    <property type="entry name" value="60 kDa chaperonin"/>
    <property type="match status" value="1"/>
</dbReference>
<dbReference type="FunFam" id="3.50.7.10:FF:000001">
    <property type="entry name" value="60 kDa chaperonin"/>
    <property type="match status" value="1"/>
</dbReference>
<dbReference type="Gene3D" id="3.50.7.10">
    <property type="entry name" value="GroEL"/>
    <property type="match status" value="1"/>
</dbReference>
<dbReference type="Gene3D" id="1.10.560.10">
    <property type="entry name" value="GroEL-like equatorial domain"/>
    <property type="match status" value="1"/>
</dbReference>
<dbReference type="Gene3D" id="3.30.260.10">
    <property type="entry name" value="TCP-1-like chaperonin intermediate domain"/>
    <property type="match status" value="1"/>
</dbReference>
<dbReference type="HAMAP" id="MF_00600">
    <property type="entry name" value="CH60"/>
    <property type="match status" value="1"/>
</dbReference>
<dbReference type="InterPro" id="IPR018370">
    <property type="entry name" value="Chaperonin_Cpn60_CS"/>
</dbReference>
<dbReference type="InterPro" id="IPR001844">
    <property type="entry name" value="Cpn60/GroEL"/>
</dbReference>
<dbReference type="InterPro" id="IPR002423">
    <property type="entry name" value="Cpn60/GroEL/TCP-1"/>
</dbReference>
<dbReference type="InterPro" id="IPR027409">
    <property type="entry name" value="GroEL-like_apical_dom_sf"/>
</dbReference>
<dbReference type="InterPro" id="IPR027413">
    <property type="entry name" value="GROEL-like_equatorial_sf"/>
</dbReference>
<dbReference type="InterPro" id="IPR027410">
    <property type="entry name" value="TCP-1-like_intermed_sf"/>
</dbReference>
<dbReference type="NCBIfam" id="TIGR02348">
    <property type="entry name" value="GroEL"/>
    <property type="match status" value="1"/>
</dbReference>
<dbReference type="NCBIfam" id="NF000592">
    <property type="entry name" value="PRK00013.1"/>
    <property type="match status" value="1"/>
</dbReference>
<dbReference type="NCBIfam" id="NF009487">
    <property type="entry name" value="PRK12849.1"/>
    <property type="match status" value="1"/>
</dbReference>
<dbReference type="NCBIfam" id="NF009488">
    <property type="entry name" value="PRK12850.1"/>
    <property type="match status" value="1"/>
</dbReference>
<dbReference type="NCBIfam" id="NF009489">
    <property type="entry name" value="PRK12851.1"/>
    <property type="match status" value="1"/>
</dbReference>
<dbReference type="PANTHER" id="PTHR45633">
    <property type="entry name" value="60 KDA HEAT SHOCK PROTEIN, MITOCHONDRIAL"/>
    <property type="match status" value="1"/>
</dbReference>
<dbReference type="Pfam" id="PF00118">
    <property type="entry name" value="Cpn60_TCP1"/>
    <property type="match status" value="1"/>
</dbReference>
<dbReference type="PRINTS" id="PR00298">
    <property type="entry name" value="CHAPERONIN60"/>
</dbReference>
<dbReference type="SUPFAM" id="SSF52029">
    <property type="entry name" value="GroEL apical domain-like"/>
    <property type="match status" value="1"/>
</dbReference>
<dbReference type="SUPFAM" id="SSF48592">
    <property type="entry name" value="GroEL equatorial domain-like"/>
    <property type="match status" value="1"/>
</dbReference>
<dbReference type="SUPFAM" id="SSF54849">
    <property type="entry name" value="GroEL-intermediate domain like"/>
    <property type="match status" value="1"/>
</dbReference>
<dbReference type="PROSITE" id="PS00296">
    <property type="entry name" value="CHAPERONINS_CPN60"/>
    <property type="match status" value="1"/>
</dbReference>
<evidence type="ECO:0000250" key="1"/>
<evidence type="ECO:0000255" key="2">
    <source>
        <dbReference type="HAMAP-Rule" id="MF_00600"/>
    </source>
</evidence>
<evidence type="ECO:0000305" key="3"/>
<name>CH60_CHLMU</name>
<keyword id="KW-0067">ATP-binding</keyword>
<keyword id="KW-0143">Chaperone</keyword>
<keyword id="KW-0963">Cytoplasm</keyword>
<keyword id="KW-0413">Isomerase</keyword>
<keyword id="KW-0547">Nucleotide-binding</keyword>
<keyword id="KW-0346">Stress response</keyword>
<proteinExistence type="evidence at transcript level"/>
<comment type="function">
    <text evidence="2">Together with its co-chaperonin GroES, plays an essential role in assisting protein folding. The GroEL-GroES system forms a nano-cage that allows encapsulation of the non-native substrate proteins and provides a physical environment optimized to promote and accelerate protein folding.</text>
</comment>
<comment type="catalytic activity">
    <reaction evidence="2">
        <text>ATP + H2O + a folded polypeptide = ADP + phosphate + an unfolded polypeptide.</text>
        <dbReference type="EC" id="5.6.1.7"/>
    </reaction>
</comment>
<comment type="subunit">
    <text evidence="2">Forms a cylinder of 14 subunits composed of two heptameric rings stacked back-to-back. Interacts with the co-chaperonin GroES.</text>
</comment>
<comment type="subcellular location">
    <subcellularLocation>
        <location evidence="2">Cytoplasm</location>
    </subcellularLocation>
</comment>
<comment type="induction">
    <text>By stress.</text>
</comment>
<comment type="similarity">
    <text evidence="2">Belongs to the chaperonin (HSP60) family.</text>
</comment>